<gene>
    <name evidence="1" type="primary">rpl6</name>
    <name type="ordered locus">UNCMA_06350</name>
    <name type="ORF">RCIX2562</name>
</gene>
<protein>
    <recommendedName>
        <fullName evidence="1">Large ribosomal subunit protein uL6</fullName>
    </recommendedName>
    <alternativeName>
        <fullName evidence="2">50S ribosomal protein L6</fullName>
    </alternativeName>
</protein>
<comment type="function">
    <text evidence="1">This protein binds to the 23S rRNA, and is important in its secondary structure. It is located near the subunit interface in the base of the L7/L12 stalk, and near the tRNA binding site of the peptidyltransferase center.</text>
</comment>
<comment type="subunit">
    <text evidence="1">Part of the 50S ribosomal subunit.</text>
</comment>
<comment type="similarity">
    <text evidence="1">Belongs to the universal ribosomal protein uL6 family.</text>
</comment>
<evidence type="ECO:0000255" key="1">
    <source>
        <dbReference type="HAMAP-Rule" id="MF_01365"/>
    </source>
</evidence>
<evidence type="ECO:0000305" key="2"/>
<feature type="chain" id="PRO_1000067984" description="Large ribosomal subunit protein uL6">
    <location>
        <begin position="1"/>
        <end position="177"/>
    </location>
</feature>
<sequence length="177" mass="19359">MAAEKVREIEVPQGVTVTVSGATLTTKGQKGQISREFRFPGISVRTDGGKVIVETGKDDKQTKATVGTYASHIKNMMTGVSEGYEYHMKIVYAHFPIQVKVEGKDKVTIGNFLGERKARTANIVGETKVTVQGDKVVLTGINKEDLGQTAANIEQACRIRKRDPRVFQDGIYITSKA</sequence>
<dbReference type="EMBL" id="AM114193">
    <property type="protein sequence ID" value="CAJ37621.1"/>
    <property type="molecule type" value="Genomic_DNA"/>
</dbReference>
<dbReference type="RefSeq" id="WP_012034964.1">
    <property type="nucleotide sequence ID" value="NC_009464.1"/>
</dbReference>
<dbReference type="SMR" id="Q0W1X2"/>
<dbReference type="STRING" id="351160.RCIX2562"/>
<dbReference type="GeneID" id="5144517"/>
<dbReference type="KEGG" id="rci:RCIX2562"/>
<dbReference type="PATRIC" id="fig|351160.9.peg.662"/>
<dbReference type="eggNOG" id="arCOG04090">
    <property type="taxonomic scope" value="Archaea"/>
</dbReference>
<dbReference type="OrthoDB" id="7144at2157"/>
<dbReference type="Proteomes" id="UP000000663">
    <property type="component" value="Chromosome"/>
</dbReference>
<dbReference type="GO" id="GO:0022625">
    <property type="term" value="C:cytosolic large ribosomal subunit"/>
    <property type="evidence" value="ECO:0007669"/>
    <property type="project" value="TreeGrafter"/>
</dbReference>
<dbReference type="GO" id="GO:0019843">
    <property type="term" value="F:rRNA binding"/>
    <property type="evidence" value="ECO:0007669"/>
    <property type="project" value="UniProtKB-UniRule"/>
</dbReference>
<dbReference type="GO" id="GO:0003735">
    <property type="term" value="F:structural constituent of ribosome"/>
    <property type="evidence" value="ECO:0007669"/>
    <property type="project" value="InterPro"/>
</dbReference>
<dbReference type="GO" id="GO:0002181">
    <property type="term" value="P:cytoplasmic translation"/>
    <property type="evidence" value="ECO:0007669"/>
    <property type="project" value="TreeGrafter"/>
</dbReference>
<dbReference type="FunFam" id="3.90.930.12:FF:000008">
    <property type="entry name" value="50S ribosomal protein L6"/>
    <property type="match status" value="1"/>
</dbReference>
<dbReference type="Gene3D" id="3.90.930.12">
    <property type="entry name" value="Ribosomal protein L6, alpha-beta domain"/>
    <property type="match status" value="2"/>
</dbReference>
<dbReference type="HAMAP" id="MF_01365_A">
    <property type="entry name" value="Ribosomal_uL6_A"/>
    <property type="match status" value="1"/>
</dbReference>
<dbReference type="InterPro" id="IPR000702">
    <property type="entry name" value="Ribosomal_uL6-like"/>
</dbReference>
<dbReference type="InterPro" id="IPR036789">
    <property type="entry name" value="Ribosomal_uL6-like_a/b-dom_sf"/>
</dbReference>
<dbReference type="InterPro" id="IPR020040">
    <property type="entry name" value="Ribosomal_uL6_a/b-dom"/>
</dbReference>
<dbReference type="InterPro" id="IPR019907">
    <property type="entry name" value="Ribosomal_uL6_arc"/>
</dbReference>
<dbReference type="InterPro" id="IPR002359">
    <property type="entry name" value="Ribosomal_uL6_CS2"/>
</dbReference>
<dbReference type="NCBIfam" id="NF004037">
    <property type="entry name" value="PRK05518.1"/>
    <property type="match status" value="1"/>
</dbReference>
<dbReference type="NCBIfam" id="TIGR03653">
    <property type="entry name" value="uL6_arch"/>
    <property type="match status" value="1"/>
</dbReference>
<dbReference type="PANTHER" id="PTHR11655:SF16">
    <property type="entry name" value="60S RIBOSOMAL PROTEIN L9"/>
    <property type="match status" value="1"/>
</dbReference>
<dbReference type="PANTHER" id="PTHR11655">
    <property type="entry name" value="60S/50S RIBOSOMAL PROTEIN L6/L9"/>
    <property type="match status" value="1"/>
</dbReference>
<dbReference type="Pfam" id="PF00347">
    <property type="entry name" value="Ribosomal_L6"/>
    <property type="match status" value="2"/>
</dbReference>
<dbReference type="PIRSF" id="PIRSF002162">
    <property type="entry name" value="Ribosomal_L6"/>
    <property type="match status" value="1"/>
</dbReference>
<dbReference type="SUPFAM" id="SSF56053">
    <property type="entry name" value="Ribosomal protein L6"/>
    <property type="match status" value="2"/>
</dbReference>
<dbReference type="PROSITE" id="PS00700">
    <property type="entry name" value="RIBOSOMAL_L6_2"/>
    <property type="match status" value="1"/>
</dbReference>
<reference key="1">
    <citation type="journal article" date="2006" name="Science">
        <title>Genome of rice cluster I archaea -- the key methane producers in the rice rhizosphere.</title>
        <authorList>
            <person name="Erkel C."/>
            <person name="Kube M."/>
            <person name="Reinhardt R."/>
            <person name="Liesack W."/>
        </authorList>
    </citation>
    <scope>NUCLEOTIDE SEQUENCE [LARGE SCALE GENOMIC DNA]</scope>
    <source>
        <strain>DSM 22066 / NBRC 105507 / MRE50</strain>
    </source>
</reference>
<keyword id="KW-1185">Reference proteome</keyword>
<keyword id="KW-0687">Ribonucleoprotein</keyword>
<keyword id="KW-0689">Ribosomal protein</keyword>
<keyword id="KW-0694">RNA-binding</keyword>
<keyword id="KW-0699">rRNA-binding</keyword>
<name>RL6_METAR</name>
<organism>
    <name type="scientific">Methanocella arvoryzae (strain DSM 22066 / NBRC 105507 / MRE50)</name>
    <dbReference type="NCBI Taxonomy" id="351160"/>
    <lineage>
        <taxon>Archaea</taxon>
        <taxon>Methanobacteriati</taxon>
        <taxon>Methanobacteriota</taxon>
        <taxon>Stenosarchaea group</taxon>
        <taxon>Methanomicrobia</taxon>
        <taxon>Methanocellales</taxon>
        <taxon>Methanocellaceae</taxon>
        <taxon>Methanocella</taxon>
    </lineage>
</organism>
<proteinExistence type="inferred from homology"/>
<accession>Q0W1X2</accession>